<gene>
    <name evidence="1" type="primary">nhaA</name>
    <name type="ordered locus">H16_B0439</name>
</gene>
<protein>
    <recommendedName>
        <fullName evidence="1">Na(+)/H(+) antiporter NhaA</fullName>
    </recommendedName>
    <alternativeName>
        <fullName evidence="1">Sodium/proton antiporter NhaA</fullName>
    </alternativeName>
</protein>
<feature type="chain" id="PRO_0000334386" description="Na(+)/H(+) antiporter NhaA">
    <location>
        <begin position="1"/>
        <end position="468"/>
    </location>
</feature>
<feature type="transmembrane region" description="Helical" evidence="1">
    <location>
        <begin position="32"/>
        <end position="52"/>
    </location>
</feature>
<feature type="transmembrane region" description="Helical" evidence="1">
    <location>
        <begin position="83"/>
        <end position="103"/>
    </location>
</feature>
<feature type="transmembrane region" description="Helical" evidence="1">
    <location>
        <begin position="119"/>
        <end position="139"/>
    </location>
</feature>
<feature type="transmembrane region" description="Helical" evidence="1">
    <location>
        <begin position="148"/>
        <end position="168"/>
    </location>
</feature>
<feature type="transmembrane region" description="Helical" evidence="1">
    <location>
        <begin position="178"/>
        <end position="198"/>
    </location>
</feature>
<feature type="transmembrane region" description="Helical" evidence="1">
    <location>
        <begin position="205"/>
        <end position="225"/>
    </location>
</feature>
<feature type="transmembrane region" description="Helical" evidence="1">
    <location>
        <begin position="320"/>
        <end position="340"/>
    </location>
</feature>
<feature type="transmembrane region" description="Helical" evidence="1">
    <location>
        <begin position="354"/>
        <end position="374"/>
    </location>
</feature>
<feature type="transmembrane region" description="Helical" evidence="1">
    <location>
        <begin position="397"/>
        <end position="417"/>
    </location>
</feature>
<feature type="transmembrane region" description="Helical" evidence="1">
    <location>
        <begin position="428"/>
        <end position="448"/>
    </location>
</feature>
<comment type="function">
    <text evidence="1">Na(+)/H(+) antiporter that extrudes sodium in exchange for external protons.</text>
</comment>
<comment type="catalytic activity">
    <reaction evidence="1">
        <text>Na(+)(in) + 2 H(+)(out) = Na(+)(out) + 2 H(+)(in)</text>
        <dbReference type="Rhea" id="RHEA:29251"/>
        <dbReference type="ChEBI" id="CHEBI:15378"/>
        <dbReference type="ChEBI" id="CHEBI:29101"/>
    </reaction>
    <physiologicalReaction direction="left-to-right" evidence="1">
        <dbReference type="Rhea" id="RHEA:29252"/>
    </physiologicalReaction>
</comment>
<comment type="subcellular location">
    <subcellularLocation>
        <location evidence="1">Cell inner membrane</location>
        <topology evidence="1">Multi-pass membrane protein</topology>
    </subcellularLocation>
</comment>
<comment type="similarity">
    <text evidence="1">Belongs to the NhaA Na(+)/H(+) (TC 2.A.33) antiporter family.</text>
</comment>
<name>NHAA_CUPNH</name>
<sequence>MDRLPPPPPPPRQPLPRAQVLAEKAFSALEHFLHIEAVSGIVLLAAAGIALLWANSPASHSYHALWHTPLSFGIGSHLVSQSLHFWINDALMTIFFLVVGMEIRREIHEGALANVRLSALPMAAALGGVIVPALIYLAINTEMPQRQGWAVPTATDIAFAVGVLALLGKSIPGNVRVFLLALAIIDDIVAVLIIAVAFSGGLDYGGFLVAGTGILMVLGLQWIGVGTAYAYVVPGAILWLGMLKTGAHPTLAGVVLGMMTPVLPGRTRERPLDVAMRALLDLRARATARTPKPEHIAAPLKQLRHAQRELLPPVIRVQMALHPWVAYLVMPLFALANAGVSIDGVDLTSGGSLGAMFGVVLALVVGKPLGIVSVSWLAVRLGWCQLPPDVTWRGVCLVGLLAGIGFTMSIFIATLAFEDVNLLGAAKLGVLLASAIAATIGLTWGFIYARGRRPSMERADESTAAASD</sequence>
<keyword id="KW-0050">Antiport</keyword>
<keyword id="KW-0997">Cell inner membrane</keyword>
<keyword id="KW-1003">Cell membrane</keyword>
<keyword id="KW-0406">Ion transport</keyword>
<keyword id="KW-0472">Membrane</keyword>
<keyword id="KW-1185">Reference proteome</keyword>
<keyword id="KW-0915">Sodium</keyword>
<keyword id="KW-0739">Sodium transport</keyword>
<keyword id="KW-0812">Transmembrane</keyword>
<keyword id="KW-1133">Transmembrane helix</keyword>
<keyword id="KW-0813">Transport</keyword>
<evidence type="ECO:0000255" key="1">
    <source>
        <dbReference type="HAMAP-Rule" id="MF_01844"/>
    </source>
</evidence>
<accession>Q0K437</accession>
<organism>
    <name type="scientific">Cupriavidus necator (strain ATCC 17699 / DSM 428 / KCTC 22496 / NCIMB 10442 / H16 / Stanier 337)</name>
    <name type="common">Ralstonia eutropha</name>
    <dbReference type="NCBI Taxonomy" id="381666"/>
    <lineage>
        <taxon>Bacteria</taxon>
        <taxon>Pseudomonadati</taxon>
        <taxon>Pseudomonadota</taxon>
        <taxon>Betaproteobacteria</taxon>
        <taxon>Burkholderiales</taxon>
        <taxon>Burkholderiaceae</taxon>
        <taxon>Cupriavidus</taxon>
    </lineage>
</organism>
<dbReference type="EMBL" id="AM260480">
    <property type="protein sequence ID" value="CAJ95237.1"/>
    <property type="molecule type" value="Genomic_DNA"/>
</dbReference>
<dbReference type="SMR" id="Q0K437"/>
<dbReference type="STRING" id="381666.H16_B0439"/>
<dbReference type="KEGG" id="reh:H16_B0439"/>
<dbReference type="eggNOG" id="COG3004">
    <property type="taxonomic scope" value="Bacteria"/>
</dbReference>
<dbReference type="HOGENOM" id="CLU_015803_1_2_4"/>
<dbReference type="Proteomes" id="UP000008210">
    <property type="component" value="Chromosome 2"/>
</dbReference>
<dbReference type="GO" id="GO:0005886">
    <property type="term" value="C:plasma membrane"/>
    <property type="evidence" value="ECO:0007669"/>
    <property type="project" value="UniProtKB-SubCell"/>
</dbReference>
<dbReference type="GO" id="GO:0015385">
    <property type="term" value="F:sodium:proton antiporter activity"/>
    <property type="evidence" value="ECO:0007669"/>
    <property type="project" value="TreeGrafter"/>
</dbReference>
<dbReference type="GO" id="GO:0006885">
    <property type="term" value="P:regulation of pH"/>
    <property type="evidence" value="ECO:0007669"/>
    <property type="project" value="InterPro"/>
</dbReference>
<dbReference type="Gene3D" id="1.20.1530.10">
    <property type="entry name" value="Na+/H+ antiporter like domain"/>
    <property type="match status" value="1"/>
</dbReference>
<dbReference type="HAMAP" id="MF_01844">
    <property type="entry name" value="NhaA"/>
    <property type="match status" value="1"/>
</dbReference>
<dbReference type="InterPro" id="IPR023171">
    <property type="entry name" value="Na/H_antiporter_dom_sf"/>
</dbReference>
<dbReference type="InterPro" id="IPR004670">
    <property type="entry name" value="NhaA"/>
</dbReference>
<dbReference type="NCBIfam" id="TIGR00773">
    <property type="entry name" value="NhaA"/>
    <property type="match status" value="1"/>
</dbReference>
<dbReference type="PANTHER" id="PTHR30341:SF0">
    <property type="entry name" value="NA(+)_H(+) ANTIPORTER NHAA"/>
    <property type="match status" value="1"/>
</dbReference>
<dbReference type="PANTHER" id="PTHR30341">
    <property type="entry name" value="SODIUM ION/PROTON ANTIPORTER NHAA-RELATED"/>
    <property type="match status" value="1"/>
</dbReference>
<dbReference type="Pfam" id="PF06965">
    <property type="entry name" value="Na_H_antiport_1"/>
    <property type="match status" value="1"/>
</dbReference>
<proteinExistence type="inferred from homology"/>
<reference key="1">
    <citation type="journal article" date="2006" name="Nat. Biotechnol.">
        <title>Genome sequence of the bioplastic-producing 'Knallgas' bacterium Ralstonia eutropha H16.</title>
        <authorList>
            <person name="Pohlmann A."/>
            <person name="Fricke W.F."/>
            <person name="Reinecke F."/>
            <person name="Kusian B."/>
            <person name="Liesegang H."/>
            <person name="Cramm R."/>
            <person name="Eitinger T."/>
            <person name="Ewering C."/>
            <person name="Poetter M."/>
            <person name="Schwartz E."/>
            <person name="Strittmatter A."/>
            <person name="Voss I."/>
            <person name="Gottschalk G."/>
            <person name="Steinbuechel A."/>
            <person name="Friedrich B."/>
            <person name="Bowien B."/>
        </authorList>
    </citation>
    <scope>NUCLEOTIDE SEQUENCE [LARGE SCALE GENOMIC DNA]</scope>
    <source>
        <strain>ATCC 17699 / DSM 428 / KCTC 22496 / NCIMB 10442 / H16 / Stanier 337</strain>
    </source>
</reference>